<organism>
    <name type="scientific">Bordetella avium (strain 197N)</name>
    <dbReference type="NCBI Taxonomy" id="360910"/>
    <lineage>
        <taxon>Bacteria</taxon>
        <taxon>Pseudomonadati</taxon>
        <taxon>Pseudomonadota</taxon>
        <taxon>Betaproteobacteria</taxon>
        <taxon>Burkholderiales</taxon>
        <taxon>Alcaligenaceae</taxon>
        <taxon>Bordetella</taxon>
    </lineage>
</organism>
<sequence length="72" mass="8264">MSKDDVIQMQGEVLENLPNATFRVKLENGHVVLGHISGKMRMHYIRILPGDKVTVELTPYDLTRARIVFRSK</sequence>
<name>IF11_BORA1</name>
<proteinExistence type="inferred from homology"/>
<gene>
    <name evidence="1" type="primary">infA1</name>
    <name type="ordered locus">BAV0055</name>
</gene>
<comment type="function">
    <text evidence="1">One of the essential components for the initiation of protein synthesis. Stabilizes the binding of IF-2 and IF-3 on the 30S subunit to which N-formylmethionyl-tRNA(fMet) subsequently binds. Helps modulate mRNA selection, yielding the 30S pre-initiation complex (PIC). Upon addition of the 50S ribosomal subunit IF-1, IF-2 and IF-3 are released leaving the mature 70S translation initiation complex.</text>
</comment>
<comment type="subunit">
    <text evidence="1">Component of the 30S ribosomal translation pre-initiation complex which assembles on the 30S ribosome in the order IF-2 and IF-3, IF-1 and N-formylmethionyl-tRNA(fMet); mRNA recruitment can occur at any time during PIC assembly.</text>
</comment>
<comment type="subcellular location">
    <subcellularLocation>
        <location evidence="1">Cytoplasm</location>
    </subcellularLocation>
</comment>
<comment type="similarity">
    <text evidence="1">Belongs to the IF-1 family.</text>
</comment>
<feature type="chain" id="PRO_0000263767" description="Translation initiation factor IF-1 1">
    <location>
        <begin position="1"/>
        <end position="72"/>
    </location>
</feature>
<feature type="domain" description="S1-like" evidence="1">
    <location>
        <begin position="1"/>
        <end position="72"/>
    </location>
</feature>
<evidence type="ECO:0000255" key="1">
    <source>
        <dbReference type="HAMAP-Rule" id="MF_00075"/>
    </source>
</evidence>
<accession>Q2L254</accession>
<protein>
    <recommendedName>
        <fullName evidence="1">Translation initiation factor IF-1 1</fullName>
    </recommendedName>
</protein>
<reference key="1">
    <citation type="journal article" date="2006" name="J. Bacteriol.">
        <title>Comparison of the genome sequence of the poultry pathogen Bordetella avium with those of B. bronchiseptica, B. pertussis, and B. parapertussis reveals extensive diversity in surface structures associated with host interaction.</title>
        <authorList>
            <person name="Sebaihia M."/>
            <person name="Preston A."/>
            <person name="Maskell D.J."/>
            <person name="Kuzmiak H."/>
            <person name="Connell T.D."/>
            <person name="King N.D."/>
            <person name="Orndorff P.E."/>
            <person name="Miyamoto D.M."/>
            <person name="Thomson N.R."/>
            <person name="Harris D."/>
            <person name="Goble A."/>
            <person name="Lord A."/>
            <person name="Murphy L."/>
            <person name="Quail M.A."/>
            <person name="Rutter S."/>
            <person name="Squares R."/>
            <person name="Squares S."/>
            <person name="Woodward J."/>
            <person name="Parkhill J."/>
            <person name="Temple L.M."/>
        </authorList>
    </citation>
    <scope>NUCLEOTIDE SEQUENCE [LARGE SCALE GENOMIC DNA]</scope>
    <source>
        <strain>197N</strain>
    </source>
</reference>
<keyword id="KW-0963">Cytoplasm</keyword>
<keyword id="KW-0396">Initiation factor</keyword>
<keyword id="KW-0648">Protein biosynthesis</keyword>
<keyword id="KW-1185">Reference proteome</keyword>
<keyword id="KW-0694">RNA-binding</keyword>
<keyword id="KW-0699">rRNA-binding</keyword>
<dbReference type="EMBL" id="AM167904">
    <property type="protein sequence ID" value="CAJ47639.1"/>
    <property type="molecule type" value="Genomic_DNA"/>
</dbReference>
<dbReference type="SMR" id="Q2L254"/>
<dbReference type="STRING" id="360910.BAV0055"/>
<dbReference type="KEGG" id="bav:BAV0055"/>
<dbReference type="eggNOG" id="COG0361">
    <property type="taxonomic scope" value="Bacteria"/>
</dbReference>
<dbReference type="HOGENOM" id="CLU_151267_1_0_4"/>
<dbReference type="OrthoDB" id="9803250at2"/>
<dbReference type="Proteomes" id="UP000001977">
    <property type="component" value="Chromosome"/>
</dbReference>
<dbReference type="GO" id="GO:0005829">
    <property type="term" value="C:cytosol"/>
    <property type="evidence" value="ECO:0007669"/>
    <property type="project" value="TreeGrafter"/>
</dbReference>
<dbReference type="GO" id="GO:0043022">
    <property type="term" value="F:ribosome binding"/>
    <property type="evidence" value="ECO:0007669"/>
    <property type="project" value="UniProtKB-UniRule"/>
</dbReference>
<dbReference type="GO" id="GO:0019843">
    <property type="term" value="F:rRNA binding"/>
    <property type="evidence" value="ECO:0007669"/>
    <property type="project" value="UniProtKB-UniRule"/>
</dbReference>
<dbReference type="GO" id="GO:0003743">
    <property type="term" value="F:translation initiation factor activity"/>
    <property type="evidence" value="ECO:0007669"/>
    <property type="project" value="UniProtKB-UniRule"/>
</dbReference>
<dbReference type="CDD" id="cd04451">
    <property type="entry name" value="S1_IF1"/>
    <property type="match status" value="1"/>
</dbReference>
<dbReference type="FunFam" id="2.40.50.140:FF:000002">
    <property type="entry name" value="Translation initiation factor IF-1"/>
    <property type="match status" value="1"/>
</dbReference>
<dbReference type="Gene3D" id="2.40.50.140">
    <property type="entry name" value="Nucleic acid-binding proteins"/>
    <property type="match status" value="1"/>
</dbReference>
<dbReference type="HAMAP" id="MF_00075">
    <property type="entry name" value="IF_1"/>
    <property type="match status" value="1"/>
</dbReference>
<dbReference type="InterPro" id="IPR012340">
    <property type="entry name" value="NA-bd_OB-fold"/>
</dbReference>
<dbReference type="InterPro" id="IPR006196">
    <property type="entry name" value="RNA-binding_domain_S1_IF1"/>
</dbReference>
<dbReference type="InterPro" id="IPR004368">
    <property type="entry name" value="TIF_IF1"/>
</dbReference>
<dbReference type="NCBIfam" id="TIGR00008">
    <property type="entry name" value="infA"/>
    <property type="match status" value="1"/>
</dbReference>
<dbReference type="PANTHER" id="PTHR33370">
    <property type="entry name" value="TRANSLATION INITIATION FACTOR IF-1, CHLOROPLASTIC"/>
    <property type="match status" value="1"/>
</dbReference>
<dbReference type="PANTHER" id="PTHR33370:SF1">
    <property type="entry name" value="TRANSLATION INITIATION FACTOR IF-1, CHLOROPLASTIC"/>
    <property type="match status" value="1"/>
</dbReference>
<dbReference type="Pfam" id="PF01176">
    <property type="entry name" value="eIF-1a"/>
    <property type="match status" value="1"/>
</dbReference>
<dbReference type="SUPFAM" id="SSF50249">
    <property type="entry name" value="Nucleic acid-binding proteins"/>
    <property type="match status" value="1"/>
</dbReference>
<dbReference type="PROSITE" id="PS50832">
    <property type="entry name" value="S1_IF1_TYPE"/>
    <property type="match status" value="1"/>
</dbReference>